<protein>
    <recommendedName>
        <fullName>Chaperonin CPN60-1, mitochondrial</fullName>
    </recommendedName>
    <alternativeName>
        <fullName>HSP60-1</fullName>
    </alternativeName>
</protein>
<sequence>MYRAAASLASKARQAGNSLATRQVGSRLAWSRNYAAKDIKFGVEARALMLRGVEELADAVKVTMGPKGRNVVIEQSFGAPKVTKDGVTVAKSIEFKDRVKNVGASLVKQVANATNDTAGDGTTCATVLTKAIFTEGCKSVAAGMNAMDLRRGISMAVDAVVTNLKGMARMISTSEEIAQVGTISANGEREIGELIAKAMEKVGKEGVITIADGNTLYNELEVVEGMKLDRGYISPYFITNSKTQKCELEDPLILIHDKKVTNMHAVVKVLEMALKKQKPLLIVAEDVESEALGTLIINKLRAGIKVCAVKAPGFGENRKANLQDLAILTGGEVITEELGMNLENFEPHMLGTCKKVTVSKDDTVILDGAGDKKSIEERAEQIRSAIENSTSDYDKEKLQERLAKLSGGVAVLKIGGASEAEVGEKKDRVTDALNATKAAVEEGIVPGGGVALLYASKELDKLQTANFDQKIGVQIIQNALKTPVHTIASNAGVEGAVVVGKLLEQENTDLGYDAAKGEYVDMVKTGIIDPLKVIRTALVDAASVSSLMTTTESIIVEIPKEEAPAPAMGGGMGGMDY</sequence>
<gene>
    <name type="primary">CPN60I</name>
    <name type="synonym">CPNA</name>
</gene>
<accession>P29185</accession>
<accession>Q43251</accession>
<accession>Q43252</accession>
<evidence type="ECO:0000269" key="1">
    <source>
    </source>
</evidence>
<evidence type="ECO:0000305" key="2"/>
<name>CH61_MAIZE</name>
<organism>
    <name type="scientific">Zea mays</name>
    <name type="common">Maize</name>
    <dbReference type="NCBI Taxonomy" id="4577"/>
    <lineage>
        <taxon>Eukaryota</taxon>
        <taxon>Viridiplantae</taxon>
        <taxon>Streptophyta</taxon>
        <taxon>Embryophyta</taxon>
        <taxon>Tracheophyta</taxon>
        <taxon>Spermatophyta</taxon>
        <taxon>Magnoliopsida</taxon>
        <taxon>Liliopsida</taxon>
        <taxon>Poales</taxon>
        <taxon>Poaceae</taxon>
        <taxon>PACMAD clade</taxon>
        <taxon>Panicoideae</taxon>
        <taxon>Andropogonodae</taxon>
        <taxon>Andropogoneae</taxon>
        <taxon>Tripsacinae</taxon>
        <taxon>Zea</taxon>
    </lineage>
</organism>
<reference key="1">
    <citation type="journal article" date="1992" name="Plant Mol. Biol.">
        <title>cDNA clones encoding Arabidopsis thaliana and Zea mays mitochondrial chaperonin HSP60 and gene expression during seed germination and heat shock.</title>
        <authorList>
            <person name="Prasad T.K."/>
            <person name="Stewart C.R."/>
        </authorList>
    </citation>
    <scope>NUCLEOTIDE SEQUENCE [MRNA]</scope>
    <scope>PROTEIN SEQUENCE OF 35-70</scope>
    <source>
        <strain>cv. Black Mexican Sweet</strain>
        <tissue>Seed</tissue>
    </source>
</reference>
<reference key="2">
    <citation type="submission" date="1993-07" db="EMBL/GenBank/DDBJ databases">
        <authorList>
            <person name="Close P.S."/>
        </authorList>
    </citation>
    <scope>NUCLEOTIDE SEQUENCE [GENOMIC DNA]</scope>
    <source>
        <strain>cv. B73</strain>
    </source>
</reference>
<reference key="3">
    <citation type="submission" date="1992-10" db="EMBL/GenBank/DDBJ databases">
        <authorList>
            <person name="Burt W.J."/>
        </authorList>
    </citation>
    <scope>NUCLEOTIDE SEQUENCE [MRNA]</scope>
    <source>
        <strain>cv. MUTIND-FR7205024</strain>
    </source>
</reference>
<comment type="function">
    <text>Implicated in mitochondrial protein import and macromolecular assembly. May facilitate the correct folding of imported proteins. May also prevent misfolding and promote the refolding and proper assembly of unfolded polypeptides generated under stress conditions in the mitochondrial matrix.</text>
</comment>
<comment type="subcellular location">
    <subcellularLocation>
        <location>Mitochondrion</location>
    </subcellularLocation>
</comment>
<comment type="induction">
    <text>By heat shock.</text>
</comment>
<comment type="similarity">
    <text evidence="2">Belongs to the chaperonin (HSP60) family.</text>
</comment>
<dbReference type="EMBL" id="Z11546">
    <property type="protein sequence ID" value="CAA77645.1"/>
    <property type="molecule type" value="mRNA"/>
</dbReference>
<dbReference type="EMBL" id="L21007">
    <property type="protein sequence ID" value="AAA33450.1"/>
    <property type="molecule type" value="Genomic_DNA"/>
</dbReference>
<dbReference type="EMBL" id="Z12114">
    <property type="protein sequence ID" value="CAA78100.1"/>
    <property type="molecule type" value="mRNA"/>
</dbReference>
<dbReference type="PIR" id="S20875">
    <property type="entry name" value="S20875"/>
</dbReference>
<dbReference type="PIR" id="S26582">
    <property type="entry name" value="S26582"/>
</dbReference>
<dbReference type="RefSeq" id="NP_001105716.1">
    <property type="nucleotide sequence ID" value="NM_001112246.1"/>
</dbReference>
<dbReference type="SMR" id="P29185"/>
<dbReference type="FunCoup" id="P29185">
    <property type="interactions" value="2813"/>
</dbReference>
<dbReference type="STRING" id="4577.P29185"/>
<dbReference type="EnsemblPlants" id="Zm00001eb222300_T002">
    <property type="protein sequence ID" value="Zm00001eb222300_P002"/>
    <property type="gene ID" value="Zm00001eb222300"/>
</dbReference>
<dbReference type="GeneID" id="542736"/>
<dbReference type="Gramene" id="Zm00001eb222300_T002">
    <property type="protein sequence ID" value="Zm00001eb222300_P002"/>
    <property type="gene ID" value="Zm00001eb222300"/>
</dbReference>
<dbReference type="KEGG" id="zma:542736"/>
<dbReference type="MaizeGDB" id="65669"/>
<dbReference type="InParanoid" id="P29185"/>
<dbReference type="OMA" id="TDTDKME"/>
<dbReference type="OrthoDB" id="1733909at2759"/>
<dbReference type="Proteomes" id="UP000007305">
    <property type="component" value="Chromosome 5"/>
</dbReference>
<dbReference type="ExpressionAtlas" id="P29185">
    <property type="expression patterns" value="baseline and differential"/>
</dbReference>
<dbReference type="GO" id="GO:0005759">
    <property type="term" value="C:mitochondrial matrix"/>
    <property type="evidence" value="ECO:0000314"/>
    <property type="project" value="AgBase"/>
</dbReference>
<dbReference type="GO" id="GO:0005739">
    <property type="term" value="C:mitochondrion"/>
    <property type="evidence" value="ECO:0000318"/>
    <property type="project" value="GO_Central"/>
</dbReference>
<dbReference type="GO" id="GO:0005524">
    <property type="term" value="F:ATP binding"/>
    <property type="evidence" value="ECO:0007669"/>
    <property type="project" value="UniProtKB-KW"/>
</dbReference>
<dbReference type="GO" id="GO:0140662">
    <property type="term" value="F:ATP-dependent protein folding chaperone"/>
    <property type="evidence" value="ECO:0007669"/>
    <property type="project" value="InterPro"/>
</dbReference>
<dbReference type="GO" id="GO:0051117">
    <property type="term" value="F:ATPase binding"/>
    <property type="evidence" value="ECO:0000353"/>
    <property type="project" value="AgBase"/>
</dbReference>
<dbReference type="GO" id="GO:0006457">
    <property type="term" value="P:protein folding"/>
    <property type="evidence" value="ECO:0000318"/>
    <property type="project" value="GO_Central"/>
</dbReference>
<dbReference type="GO" id="GO:0042026">
    <property type="term" value="P:protein refolding"/>
    <property type="evidence" value="ECO:0007669"/>
    <property type="project" value="InterPro"/>
</dbReference>
<dbReference type="CDD" id="cd03344">
    <property type="entry name" value="GroEL"/>
    <property type="match status" value="1"/>
</dbReference>
<dbReference type="FunFam" id="1.10.560.10:FF:000001">
    <property type="entry name" value="60 kDa chaperonin"/>
    <property type="match status" value="1"/>
</dbReference>
<dbReference type="FunFam" id="3.50.7.10:FF:000001">
    <property type="entry name" value="60 kDa chaperonin"/>
    <property type="match status" value="1"/>
</dbReference>
<dbReference type="Gene3D" id="3.50.7.10">
    <property type="entry name" value="GroEL"/>
    <property type="match status" value="1"/>
</dbReference>
<dbReference type="Gene3D" id="1.10.560.10">
    <property type="entry name" value="GroEL-like equatorial domain"/>
    <property type="match status" value="1"/>
</dbReference>
<dbReference type="Gene3D" id="3.30.260.10">
    <property type="entry name" value="TCP-1-like chaperonin intermediate domain"/>
    <property type="match status" value="1"/>
</dbReference>
<dbReference type="HAMAP" id="MF_00600">
    <property type="entry name" value="CH60"/>
    <property type="match status" value="1"/>
</dbReference>
<dbReference type="InterPro" id="IPR018370">
    <property type="entry name" value="Chaperonin_Cpn60_CS"/>
</dbReference>
<dbReference type="InterPro" id="IPR001844">
    <property type="entry name" value="Cpn60/GroEL"/>
</dbReference>
<dbReference type="InterPro" id="IPR002423">
    <property type="entry name" value="Cpn60/GroEL/TCP-1"/>
</dbReference>
<dbReference type="InterPro" id="IPR027409">
    <property type="entry name" value="GroEL-like_apical_dom_sf"/>
</dbReference>
<dbReference type="InterPro" id="IPR027413">
    <property type="entry name" value="GROEL-like_equatorial_sf"/>
</dbReference>
<dbReference type="InterPro" id="IPR027410">
    <property type="entry name" value="TCP-1-like_intermed_sf"/>
</dbReference>
<dbReference type="NCBIfam" id="TIGR02348">
    <property type="entry name" value="GroEL"/>
    <property type="match status" value="1"/>
</dbReference>
<dbReference type="NCBIfam" id="NF000592">
    <property type="entry name" value="PRK00013.1"/>
    <property type="match status" value="1"/>
</dbReference>
<dbReference type="NCBIfam" id="NF009487">
    <property type="entry name" value="PRK12849.1"/>
    <property type="match status" value="1"/>
</dbReference>
<dbReference type="NCBIfam" id="NF009488">
    <property type="entry name" value="PRK12850.1"/>
    <property type="match status" value="1"/>
</dbReference>
<dbReference type="NCBIfam" id="NF009489">
    <property type="entry name" value="PRK12851.1"/>
    <property type="match status" value="1"/>
</dbReference>
<dbReference type="PANTHER" id="PTHR45633">
    <property type="entry name" value="60 KDA HEAT SHOCK PROTEIN, MITOCHONDRIAL"/>
    <property type="match status" value="1"/>
</dbReference>
<dbReference type="Pfam" id="PF00118">
    <property type="entry name" value="Cpn60_TCP1"/>
    <property type="match status" value="1"/>
</dbReference>
<dbReference type="PRINTS" id="PR00298">
    <property type="entry name" value="CHAPERONIN60"/>
</dbReference>
<dbReference type="SUPFAM" id="SSF52029">
    <property type="entry name" value="GroEL apical domain-like"/>
    <property type="match status" value="1"/>
</dbReference>
<dbReference type="SUPFAM" id="SSF48592">
    <property type="entry name" value="GroEL equatorial domain-like"/>
    <property type="match status" value="1"/>
</dbReference>
<dbReference type="SUPFAM" id="SSF54849">
    <property type="entry name" value="GroEL-intermediate domain like"/>
    <property type="match status" value="1"/>
</dbReference>
<dbReference type="PROSITE" id="PS00296">
    <property type="entry name" value="CHAPERONINS_CPN60"/>
    <property type="match status" value="1"/>
</dbReference>
<feature type="transit peptide" description="Mitochondrion" evidence="1">
    <location>
        <begin position="1"/>
        <end position="34"/>
    </location>
</feature>
<feature type="chain" id="PRO_0000005014" description="Chaperonin CPN60-1, mitochondrial">
    <location>
        <begin position="35"/>
        <end position="577"/>
    </location>
</feature>
<feature type="sequence conflict" description="In Ref. 3; CAA78100." evidence="2" ref="3">
    <original>T</original>
    <variation>A</variation>
    <location>
        <position position="21"/>
    </location>
</feature>
<feature type="sequence conflict" description="In Ref. 1; CAA77645." evidence="2" ref="1">
    <original>KQ</original>
    <variation>NR</variation>
    <location>
        <begin position="108"/>
        <end position="109"/>
    </location>
</feature>
<feature type="sequence conflict" description="In Ref. 1; CAA77645." evidence="2" ref="1">
    <original>A</original>
    <variation>D</variation>
    <location>
        <position position="125"/>
    </location>
</feature>
<feature type="sequence conflict" description="In Ref. 1; CAA77645." evidence="2" ref="1">
    <original>D</original>
    <variation>N</variation>
    <location>
        <position position="148"/>
    </location>
</feature>
<feature type="sequence conflict" description="In Ref. 3; CAA78100." evidence="2" ref="3">
    <original>S</original>
    <variation>P</variation>
    <location>
        <position position="241"/>
    </location>
</feature>
<feature type="sequence conflict" description="In Ref. 1; CAA77645." evidence="2" ref="1">
    <original>L</original>
    <variation>F</variation>
    <location>
        <position position="328"/>
    </location>
</feature>
<feature type="sequence conflict" description="In Ref. 1; CAA77645." evidence="2" ref="1">
    <original>I</original>
    <variation>L</variation>
    <location>
        <position position="382"/>
    </location>
</feature>
<feature type="sequence conflict" description="In Ref. 2; AAA33450." evidence="2" ref="2">
    <original>A</original>
    <variation>P</variation>
    <location>
        <position position="403"/>
    </location>
</feature>
<keyword id="KW-0067">ATP-binding</keyword>
<keyword id="KW-0143">Chaperone</keyword>
<keyword id="KW-0903">Direct protein sequencing</keyword>
<keyword id="KW-0496">Mitochondrion</keyword>
<keyword id="KW-0547">Nucleotide-binding</keyword>
<keyword id="KW-1185">Reference proteome</keyword>
<keyword id="KW-0346">Stress response</keyword>
<keyword id="KW-0809">Transit peptide</keyword>
<proteinExistence type="evidence at protein level"/>